<keyword id="KW-0687">Ribonucleoprotein</keyword>
<keyword id="KW-0689">Ribosomal protein</keyword>
<dbReference type="EMBL" id="CP001132">
    <property type="protein sequence ID" value="ACH84496.1"/>
    <property type="molecule type" value="Genomic_DNA"/>
</dbReference>
<dbReference type="RefSeq" id="WP_009567983.1">
    <property type="nucleotide sequence ID" value="NC_011206.1"/>
</dbReference>
<dbReference type="SMR" id="B5ENA7"/>
<dbReference type="GeneID" id="65281714"/>
<dbReference type="KEGG" id="afe:Lferr_2295"/>
<dbReference type="eggNOG" id="COG0227">
    <property type="taxonomic scope" value="Bacteria"/>
</dbReference>
<dbReference type="HOGENOM" id="CLU_064548_3_1_6"/>
<dbReference type="GO" id="GO:0022625">
    <property type="term" value="C:cytosolic large ribosomal subunit"/>
    <property type="evidence" value="ECO:0007669"/>
    <property type="project" value="TreeGrafter"/>
</dbReference>
<dbReference type="GO" id="GO:0003735">
    <property type="term" value="F:structural constituent of ribosome"/>
    <property type="evidence" value="ECO:0007669"/>
    <property type="project" value="InterPro"/>
</dbReference>
<dbReference type="GO" id="GO:0006412">
    <property type="term" value="P:translation"/>
    <property type="evidence" value="ECO:0007669"/>
    <property type="project" value="UniProtKB-UniRule"/>
</dbReference>
<dbReference type="FunFam" id="2.30.170.40:FF:000001">
    <property type="entry name" value="50S ribosomal protein L28"/>
    <property type="match status" value="1"/>
</dbReference>
<dbReference type="Gene3D" id="2.30.170.40">
    <property type="entry name" value="Ribosomal protein L28/L24"/>
    <property type="match status" value="1"/>
</dbReference>
<dbReference type="HAMAP" id="MF_00373">
    <property type="entry name" value="Ribosomal_bL28"/>
    <property type="match status" value="1"/>
</dbReference>
<dbReference type="InterPro" id="IPR026569">
    <property type="entry name" value="Ribosomal_bL28"/>
</dbReference>
<dbReference type="InterPro" id="IPR034704">
    <property type="entry name" value="Ribosomal_bL28/bL31-like_sf"/>
</dbReference>
<dbReference type="InterPro" id="IPR001383">
    <property type="entry name" value="Ribosomal_bL28_bact-type"/>
</dbReference>
<dbReference type="InterPro" id="IPR037147">
    <property type="entry name" value="Ribosomal_bL28_sf"/>
</dbReference>
<dbReference type="NCBIfam" id="TIGR00009">
    <property type="entry name" value="L28"/>
    <property type="match status" value="1"/>
</dbReference>
<dbReference type="PANTHER" id="PTHR13528">
    <property type="entry name" value="39S RIBOSOMAL PROTEIN L28, MITOCHONDRIAL"/>
    <property type="match status" value="1"/>
</dbReference>
<dbReference type="PANTHER" id="PTHR13528:SF2">
    <property type="entry name" value="LARGE RIBOSOMAL SUBUNIT PROTEIN BL28M"/>
    <property type="match status" value="1"/>
</dbReference>
<dbReference type="Pfam" id="PF00830">
    <property type="entry name" value="Ribosomal_L28"/>
    <property type="match status" value="1"/>
</dbReference>
<dbReference type="SUPFAM" id="SSF143800">
    <property type="entry name" value="L28p-like"/>
    <property type="match status" value="1"/>
</dbReference>
<gene>
    <name evidence="1" type="primary">rpmB</name>
    <name type="ordered locus">Lferr_2295</name>
</gene>
<organism>
    <name type="scientific">Acidithiobacillus ferrooxidans (strain ATCC 53993 / BNL-5-31)</name>
    <name type="common">Leptospirillum ferrooxidans (ATCC 53993)</name>
    <dbReference type="NCBI Taxonomy" id="380394"/>
    <lineage>
        <taxon>Bacteria</taxon>
        <taxon>Pseudomonadati</taxon>
        <taxon>Pseudomonadota</taxon>
        <taxon>Acidithiobacillia</taxon>
        <taxon>Acidithiobacillales</taxon>
        <taxon>Acidithiobacillaceae</taxon>
        <taxon>Acidithiobacillus</taxon>
    </lineage>
</organism>
<reference key="1">
    <citation type="submission" date="2008-08" db="EMBL/GenBank/DDBJ databases">
        <title>Complete sequence of Acidithiobacillus ferrooxidans ATCC 53993.</title>
        <authorList>
            <person name="Lucas S."/>
            <person name="Copeland A."/>
            <person name="Lapidus A."/>
            <person name="Glavina del Rio T."/>
            <person name="Dalin E."/>
            <person name="Tice H."/>
            <person name="Bruce D."/>
            <person name="Goodwin L."/>
            <person name="Pitluck S."/>
            <person name="Sims D."/>
            <person name="Brettin T."/>
            <person name="Detter J.C."/>
            <person name="Han C."/>
            <person name="Kuske C.R."/>
            <person name="Larimer F."/>
            <person name="Land M."/>
            <person name="Hauser L."/>
            <person name="Kyrpides N."/>
            <person name="Lykidis A."/>
            <person name="Borole A.P."/>
        </authorList>
    </citation>
    <scope>NUCLEOTIDE SEQUENCE [LARGE SCALE GENOMIC DNA]</scope>
    <source>
        <strain>ATCC 53993 / BNL-5-31</strain>
    </source>
</reference>
<evidence type="ECO:0000255" key="1">
    <source>
        <dbReference type="HAMAP-Rule" id="MF_00373"/>
    </source>
</evidence>
<evidence type="ECO:0000305" key="2"/>
<sequence>MSRVCKVTGKKPMAGNNVSHAHNKTRRRFLPNLQYHRFWVESENRWVRMRVSTKGIRTIDKKGIDVVLADLRAAGEKI</sequence>
<name>RL28_ACIF5</name>
<protein>
    <recommendedName>
        <fullName evidence="1">Large ribosomal subunit protein bL28</fullName>
    </recommendedName>
    <alternativeName>
        <fullName evidence="2">50S ribosomal protein L28</fullName>
    </alternativeName>
</protein>
<accession>B5ENA7</accession>
<comment type="similarity">
    <text evidence="1">Belongs to the bacterial ribosomal protein bL28 family.</text>
</comment>
<proteinExistence type="inferred from homology"/>
<feature type="chain" id="PRO_1000121572" description="Large ribosomal subunit protein bL28">
    <location>
        <begin position="1"/>
        <end position="78"/>
    </location>
</feature>